<reference key="1">
    <citation type="journal article" date="2011" name="J. Bacteriol.">
        <title>Comparative genomics of 28 Salmonella enterica isolates: evidence for CRISPR-mediated adaptive sublineage evolution.</title>
        <authorList>
            <person name="Fricke W.F."/>
            <person name="Mammel M.K."/>
            <person name="McDermott P.F."/>
            <person name="Tartera C."/>
            <person name="White D.G."/>
            <person name="Leclerc J.E."/>
            <person name="Ravel J."/>
            <person name="Cebula T.A."/>
        </authorList>
    </citation>
    <scope>NUCLEOTIDE SEQUENCE [LARGE SCALE GENOMIC DNA]</scope>
    <source>
        <strain>SL476</strain>
    </source>
</reference>
<keyword id="KW-0687">Ribonucleoprotein</keyword>
<keyword id="KW-0689">Ribosomal protein</keyword>
<keyword id="KW-0694">RNA-binding</keyword>
<keyword id="KW-0699">rRNA-binding</keyword>
<sequence length="118" mass="13497">MARVKRGVIARARHKKILKQAKGYYGARSRVYRVAFQAVIKAGQYAYRDRRQRKRQFRQLWIARINAAARQNGISYSKFINGLKKASVEIDRKILADIAVFDKVAFTALVEKAKAALA</sequence>
<name>RL20_SALHS</name>
<organism>
    <name type="scientific">Salmonella heidelberg (strain SL476)</name>
    <dbReference type="NCBI Taxonomy" id="454169"/>
    <lineage>
        <taxon>Bacteria</taxon>
        <taxon>Pseudomonadati</taxon>
        <taxon>Pseudomonadota</taxon>
        <taxon>Gammaproteobacteria</taxon>
        <taxon>Enterobacterales</taxon>
        <taxon>Enterobacteriaceae</taxon>
        <taxon>Salmonella</taxon>
    </lineage>
</organism>
<accession>B4TGH4</accession>
<comment type="function">
    <text evidence="1">Binds directly to 23S ribosomal RNA and is necessary for the in vitro assembly process of the 50S ribosomal subunit. It is not involved in the protein synthesizing functions of that subunit.</text>
</comment>
<comment type="similarity">
    <text evidence="1">Belongs to the bacterial ribosomal protein bL20 family.</text>
</comment>
<feature type="chain" id="PRO_1000122367" description="Large ribosomal subunit protein bL20">
    <location>
        <begin position="1"/>
        <end position="118"/>
    </location>
</feature>
<evidence type="ECO:0000255" key="1">
    <source>
        <dbReference type="HAMAP-Rule" id="MF_00382"/>
    </source>
</evidence>
<evidence type="ECO:0000305" key="2"/>
<proteinExistence type="inferred from homology"/>
<gene>
    <name evidence="1" type="primary">rplT</name>
    <name type="ordered locus">SeHA_C1464</name>
</gene>
<dbReference type="EMBL" id="CP001120">
    <property type="protein sequence ID" value="ACF66163.1"/>
    <property type="molecule type" value="Genomic_DNA"/>
</dbReference>
<dbReference type="RefSeq" id="WP_000124850.1">
    <property type="nucleotide sequence ID" value="NC_011083.1"/>
</dbReference>
<dbReference type="SMR" id="B4TGH4"/>
<dbReference type="GeneID" id="98388757"/>
<dbReference type="KEGG" id="seh:SeHA_C1464"/>
<dbReference type="HOGENOM" id="CLU_123265_0_1_6"/>
<dbReference type="Proteomes" id="UP000001866">
    <property type="component" value="Chromosome"/>
</dbReference>
<dbReference type="GO" id="GO:1990904">
    <property type="term" value="C:ribonucleoprotein complex"/>
    <property type="evidence" value="ECO:0007669"/>
    <property type="project" value="UniProtKB-KW"/>
</dbReference>
<dbReference type="GO" id="GO:0005840">
    <property type="term" value="C:ribosome"/>
    <property type="evidence" value="ECO:0007669"/>
    <property type="project" value="UniProtKB-KW"/>
</dbReference>
<dbReference type="GO" id="GO:0019843">
    <property type="term" value="F:rRNA binding"/>
    <property type="evidence" value="ECO:0007669"/>
    <property type="project" value="UniProtKB-UniRule"/>
</dbReference>
<dbReference type="GO" id="GO:0003735">
    <property type="term" value="F:structural constituent of ribosome"/>
    <property type="evidence" value="ECO:0007669"/>
    <property type="project" value="InterPro"/>
</dbReference>
<dbReference type="GO" id="GO:0000027">
    <property type="term" value="P:ribosomal large subunit assembly"/>
    <property type="evidence" value="ECO:0007669"/>
    <property type="project" value="UniProtKB-UniRule"/>
</dbReference>
<dbReference type="GO" id="GO:0006412">
    <property type="term" value="P:translation"/>
    <property type="evidence" value="ECO:0007669"/>
    <property type="project" value="InterPro"/>
</dbReference>
<dbReference type="CDD" id="cd07026">
    <property type="entry name" value="Ribosomal_L20"/>
    <property type="match status" value="1"/>
</dbReference>
<dbReference type="FunFam" id="1.10.1900.20:FF:000001">
    <property type="entry name" value="50S ribosomal protein L20"/>
    <property type="match status" value="1"/>
</dbReference>
<dbReference type="Gene3D" id="6.10.160.10">
    <property type="match status" value="1"/>
</dbReference>
<dbReference type="Gene3D" id="1.10.1900.20">
    <property type="entry name" value="Ribosomal protein L20"/>
    <property type="match status" value="1"/>
</dbReference>
<dbReference type="HAMAP" id="MF_00382">
    <property type="entry name" value="Ribosomal_bL20"/>
    <property type="match status" value="1"/>
</dbReference>
<dbReference type="InterPro" id="IPR005813">
    <property type="entry name" value="Ribosomal_bL20"/>
</dbReference>
<dbReference type="InterPro" id="IPR049946">
    <property type="entry name" value="RIBOSOMAL_L20_CS"/>
</dbReference>
<dbReference type="InterPro" id="IPR035566">
    <property type="entry name" value="Ribosomal_protein_bL20_C"/>
</dbReference>
<dbReference type="NCBIfam" id="TIGR01032">
    <property type="entry name" value="rplT_bact"/>
    <property type="match status" value="1"/>
</dbReference>
<dbReference type="PANTHER" id="PTHR10986">
    <property type="entry name" value="39S RIBOSOMAL PROTEIN L20"/>
    <property type="match status" value="1"/>
</dbReference>
<dbReference type="Pfam" id="PF00453">
    <property type="entry name" value="Ribosomal_L20"/>
    <property type="match status" value="1"/>
</dbReference>
<dbReference type="PRINTS" id="PR00062">
    <property type="entry name" value="RIBOSOMALL20"/>
</dbReference>
<dbReference type="SUPFAM" id="SSF74731">
    <property type="entry name" value="Ribosomal protein L20"/>
    <property type="match status" value="1"/>
</dbReference>
<dbReference type="PROSITE" id="PS00937">
    <property type="entry name" value="RIBOSOMAL_L20"/>
    <property type="match status" value="1"/>
</dbReference>
<protein>
    <recommendedName>
        <fullName evidence="1">Large ribosomal subunit protein bL20</fullName>
    </recommendedName>
    <alternativeName>
        <fullName evidence="2">50S ribosomal protein L20</fullName>
    </alternativeName>
</protein>